<dbReference type="EMBL" id="AE005674">
    <property type="protein sequence ID" value="AAN45742.2"/>
    <property type="molecule type" value="Genomic_DNA"/>
</dbReference>
<dbReference type="EMBL" id="AE014073">
    <property type="protein sequence ID" value="AAP19525.1"/>
    <property type="molecule type" value="Genomic_DNA"/>
</dbReference>
<dbReference type="RefSeq" id="NP_710035.2">
    <property type="nucleotide sequence ID" value="NC_004337.2"/>
</dbReference>
<dbReference type="RefSeq" id="WP_001122490.1">
    <property type="nucleotide sequence ID" value="NZ_WPGW01000048.1"/>
</dbReference>
<dbReference type="SMR" id="Q83P35"/>
<dbReference type="STRING" id="198214.SF4325"/>
<dbReference type="PaxDb" id="198214-SF4325"/>
<dbReference type="GeneID" id="1027072"/>
<dbReference type="KEGG" id="sfl:SF4325"/>
<dbReference type="KEGG" id="sfx:S4593"/>
<dbReference type="PATRIC" id="fig|198214.7.peg.5099"/>
<dbReference type="HOGENOM" id="CLU_004131_5_1_6"/>
<dbReference type="Proteomes" id="UP000001006">
    <property type="component" value="Chromosome"/>
</dbReference>
<dbReference type="Proteomes" id="UP000002673">
    <property type="component" value="Chromosome"/>
</dbReference>
<dbReference type="GO" id="GO:0032300">
    <property type="term" value="C:mismatch repair complex"/>
    <property type="evidence" value="ECO:0007669"/>
    <property type="project" value="InterPro"/>
</dbReference>
<dbReference type="GO" id="GO:0005524">
    <property type="term" value="F:ATP binding"/>
    <property type="evidence" value="ECO:0007669"/>
    <property type="project" value="InterPro"/>
</dbReference>
<dbReference type="GO" id="GO:0016887">
    <property type="term" value="F:ATP hydrolysis activity"/>
    <property type="evidence" value="ECO:0007669"/>
    <property type="project" value="InterPro"/>
</dbReference>
<dbReference type="GO" id="GO:0140664">
    <property type="term" value="F:ATP-dependent DNA damage sensor activity"/>
    <property type="evidence" value="ECO:0007669"/>
    <property type="project" value="InterPro"/>
</dbReference>
<dbReference type="GO" id="GO:0030983">
    <property type="term" value="F:mismatched DNA binding"/>
    <property type="evidence" value="ECO:0007669"/>
    <property type="project" value="InterPro"/>
</dbReference>
<dbReference type="GO" id="GO:0006298">
    <property type="term" value="P:mismatch repair"/>
    <property type="evidence" value="ECO:0007669"/>
    <property type="project" value="UniProtKB-UniRule"/>
</dbReference>
<dbReference type="CDD" id="cd16926">
    <property type="entry name" value="HATPase_MutL-MLH-PMS-like"/>
    <property type="match status" value="1"/>
</dbReference>
<dbReference type="CDD" id="cd03482">
    <property type="entry name" value="MutL_Trans_MutL"/>
    <property type="match status" value="1"/>
</dbReference>
<dbReference type="FunFam" id="3.30.230.10:FF:000013">
    <property type="entry name" value="DNA mismatch repair endonuclease MutL"/>
    <property type="match status" value="1"/>
</dbReference>
<dbReference type="FunFam" id="3.30.565.10:FF:000003">
    <property type="entry name" value="DNA mismatch repair endonuclease MutL"/>
    <property type="match status" value="1"/>
</dbReference>
<dbReference type="FunFam" id="3.30.1370.100:FF:000002">
    <property type="entry name" value="DNA mismatch repair protein MutL"/>
    <property type="match status" value="1"/>
</dbReference>
<dbReference type="Gene3D" id="3.30.230.10">
    <property type="match status" value="1"/>
</dbReference>
<dbReference type="Gene3D" id="3.30.565.10">
    <property type="entry name" value="Histidine kinase-like ATPase, C-terminal domain"/>
    <property type="match status" value="1"/>
</dbReference>
<dbReference type="Gene3D" id="3.30.1540.20">
    <property type="entry name" value="MutL, C-terminal domain, dimerisation subdomain"/>
    <property type="match status" value="1"/>
</dbReference>
<dbReference type="Gene3D" id="3.30.1370.100">
    <property type="entry name" value="MutL, C-terminal domain, regulatory subdomain"/>
    <property type="match status" value="1"/>
</dbReference>
<dbReference type="HAMAP" id="MF_00149">
    <property type="entry name" value="DNA_mis_repair"/>
    <property type="match status" value="1"/>
</dbReference>
<dbReference type="InterPro" id="IPR014762">
    <property type="entry name" value="DNA_mismatch_repair_CS"/>
</dbReference>
<dbReference type="InterPro" id="IPR020667">
    <property type="entry name" value="DNA_mismatch_repair_MutL"/>
</dbReference>
<dbReference type="InterPro" id="IPR013507">
    <property type="entry name" value="DNA_mismatch_S5_2-like"/>
</dbReference>
<dbReference type="InterPro" id="IPR036890">
    <property type="entry name" value="HATPase_C_sf"/>
</dbReference>
<dbReference type="InterPro" id="IPR002099">
    <property type="entry name" value="MutL/Mlh/PMS"/>
</dbReference>
<dbReference type="InterPro" id="IPR038973">
    <property type="entry name" value="MutL/Mlh/Pms-like"/>
</dbReference>
<dbReference type="InterPro" id="IPR014790">
    <property type="entry name" value="MutL_C"/>
</dbReference>
<dbReference type="InterPro" id="IPR042120">
    <property type="entry name" value="MutL_C_dimsub"/>
</dbReference>
<dbReference type="InterPro" id="IPR042121">
    <property type="entry name" value="MutL_C_regsub"/>
</dbReference>
<dbReference type="InterPro" id="IPR037198">
    <property type="entry name" value="MutL_C_sf"/>
</dbReference>
<dbReference type="InterPro" id="IPR020568">
    <property type="entry name" value="Ribosomal_Su5_D2-typ_SF"/>
</dbReference>
<dbReference type="InterPro" id="IPR014721">
    <property type="entry name" value="Ribsml_uS5_D2-typ_fold_subgr"/>
</dbReference>
<dbReference type="NCBIfam" id="TIGR00585">
    <property type="entry name" value="mutl"/>
    <property type="match status" value="1"/>
</dbReference>
<dbReference type="NCBIfam" id="NF000948">
    <property type="entry name" value="PRK00095.1-1"/>
    <property type="match status" value="1"/>
</dbReference>
<dbReference type="PANTHER" id="PTHR10073">
    <property type="entry name" value="DNA MISMATCH REPAIR PROTEIN MLH, PMS, MUTL"/>
    <property type="match status" value="1"/>
</dbReference>
<dbReference type="PANTHER" id="PTHR10073:SF12">
    <property type="entry name" value="DNA MISMATCH REPAIR PROTEIN MLH1"/>
    <property type="match status" value="1"/>
</dbReference>
<dbReference type="Pfam" id="PF01119">
    <property type="entry name" value="DNA_mis_repair"/>
    <property type="match status" value="1"/>
</dbReference>
<dbReference type="Pfam" id="PF13589">
    <property type="entry name" value="HATPase_c_3"/>
    <property type="match status" value="1"/>
</dbReference>
<dbReference type="Pfam" id="PF08676">
    <property type="entry name" value="MutL_C"/>
    <property type="match status" value="1"/>
</dbReference>
<dbReference type="SMART" id="SM01340">
    <property type="entry name" value="DNA_mis_repair"/>
    <property type="match status" value="1"/>
</dbReference>
<dbReference type="SMART" id="SM00853">
    <property type="entry name" value="MutL_C"/>
    <property type="match status" value="1"/>
</dbReference>
<dbReference type="SUPFAM" id="SSF55874">
    <property type="entry name" value="ATPase domain of HSP90 chaperone/DNA topoisomerase II/histidine kinase"/>
    <property type="match status" value="1"/>
</dbReference>
<dbReference type="SUPFAM" id="SSF118116">
    <property type="entry name" value="DNA mismatch repair protein MutL"/>
    <property type="match status" value="1"/>
</dbReference>
<dbReference type="SUPFAM" id="SSF54211">
    <property type="entry name" value="Ribosomal protein S5 domain 2-like"/>
    <property type="match status" value="1"/>
</dbReference>
<dbReference type="PROSITE" id="PS00058">
    <property type="entry name" value="DNA_MISMATCH_REPAIR_1"/>
    <property type="match status" value="1"/>
</dbReference>
<protein>
    <recommendedName>
        <fullName evidence="1">DNA mismatch repair protein MutL</fullName>
    </recommendedName>
</protein>
<gene>
    <name evidence="1" type="primary">mutL</name>
    <name type="ordered locus">SF4325</name>
    <name type="ordered locus">S4593</name>
</gene>
<accession>Q83P35</accession>
<accession>Q7UAL0</accession>
<sequence length="615" mass="67838">MPIQVLPPQLANQIAAGEVVERPASVVKELVENSLDAGATRIDIDIERGGAKLIRIRDNGCGIKKDELALALARHATSKIASLDDLEAIISLGFRGEALASISSVSRLTLTSRTAEQQEAWQAYAEGRDMDVTVKPAAHPVGTTLEVLDLFYNTPARRKFLRTEKTEFSHIDEIIRRIALARFDVTINLSHNGKIVRQYRAVPEGGQKERRLGAICGTAFLEQALAIEWQHGDLTLRGWVADPNHTTPALAEIQYCYVNGRMMRDRLINHAIRQACEDKLGADQQPAFVLYLEIDPHQVDVNVHPAKHEVRFHQSRLVHDFIYQGVLSVLQQQLETPLPLDDEPQPAPRAIPENRVAAGRNHFAEPAAREPVAPRYSPAPASGSRPAAPWPNAQPGYQKQQGEVYRQLLQTPAPMQKPKAPEPQEPALAANSQSFGRVLTIVHSDCALLERDGNISLLSLPVAERWLRQAQLTPGEAPVCAQPLLIPLRLKVSGEEKSALEKAQSALAELGIDFQSDAQHVTIRAVPLPLRQQNLQILIPELIGYLAKQSVFEPGNIAQWIARNLMSEHAQWSMAQAITLLADVERLCPQLVKTPPGGLLQSVDLHPAIKALKDE</sequence>
<organism>
    <name type="scientific">Shigella flexneri</name>
    <dbReference type="NCBI Taxonomy" id="623"/>
    <lineage>
        <taxon>Bacteria</taxon>
        <taxon>Pseudomonadati</taxon>
        <taxon>Pseudomonadota</taxon>
        <taxon>Gammaproteobacteria</taxon>
        <taxon>Enterobacterales</taxon>
        <taxon>Enterobacteriaceae</taxon>
        <taxon>Shigella</taxon>
    </lineage>
</organism>
<reference key="1">
    <citation type="journal article" date="2002" name="Nucleic Acids Res.">
        <title>Genome sequence of Shigella flexneri 2a: insights into pathogenicity through comparison with genomes of Escherichia coli K12 and O157.</title>
        <authorList>
            <person name="Jin Q."/>
            <person name="Yuan Z."/>
            <person name="Xu J."/>
            <person name="Wang Y."/>
            <person name="Shen Y."/>
            <person name="Lu W."/>
            <person name="Wang J."/>
            <person name="Liu H."/>
            <person name="Yang J."/>
            <person name="Yang F."/>
            <person name="Zhang X."/>
            <person name="Zhang J."/>
            <person name="Yang G."/>
            <person name="Wu H."/>
            <person name="Qu D."/>
            <person name="Dong J."/>
            <person name="Sun L."/>
            <person name="Xue Y."/>
            <person name="Zhao A."/>
            <person name="Gao Y."/>
            <person name="Zhu J."/>
            <person name="Kan B."/>
            <person name="Ding K."/>
            <person name="Chen S."/>
            <person name="Cheng H."/>
            <person name="Yao Z."/>
            <person name="He B."/>
            <person name="Chen R."/>
            <person name="Ma D."/>
            <person name="Qiang B."/>
            <person name="Wen Y."/>
            <person name="Hou Y."/>
            <person name="Yu J."/>
        </authorList>
    </citation>
    <scope>NUCLEOTIDE SEQUENCE [LARGE SCALE GENOMIC DNA]</scope>
    <source>
        <strain>301 / Serotype 2a</strain>
    </source>
</reference>
<reference key="2">
    <citation type="journal article" date="2003" name="Infect. Immun.">
        <title>Complete genome sequence and comparative genomics of Shigella flexneri serotype 2a strain 2457T.</title>
        <authorList>
            <person name="Wei J."/>
            <person name="Goldberg M.B."/>
            <person name="Burland V."/>
            <person name="Venkatesan M.M."/>
            <person name="Deng W."/>
            <person name="Fournier G."/>
            <person name="Mayhew G.F."/>
            <person name="Plunkett G. III"/>
            <person name="Rose D.J."/>
            <person name="Darling A."/>
            <person name="Mau B."/>
            <person name="Perna N.T."/>
            <person name="Payne S.M."/>
            <person name="Runyen-Janecky L.J."/>
            <person name="Zhou S."/>
            <person name="Schwartz D.C."/>
            <person name="Blattner F.R."/>
        </authorList>
    </citation>
    <scope>NUCLEOTIDE SEQUENCE [LARGE SCALE GENOMIC DNA]</scope>
    <source>
        <strain>ATCC 700930 / 2457T / Serotype 2a</strain>
    </source>
</reference>
<feature type="chain" id="PRO_1000010079" description="DNA mismatch repair protein MutL">
    <location>
        <begin position="1"/>
        <end position="615"/>
    </location>
</feature>
<feature type="region of interest" description="Disordered" evidence="2">
    <location>
        <begin position="363"/>
        <end position="397"/>
    </location>
</feature>
<feature type="compositionally biased region" description="Low complexity" evidence="2">
    <location>
        <begin position="364"/>
        <end position="387"/>
    </location>
</feature>
<comment type="function">
    <text evidence="1">This protein is involved in the repair of mismatches in DNA. It is required for dam-dependent methyl-directed DNA mismatch repair. May act as a 'molecular matchmaker', a protein that promotes the formation of a stable complex between two or more DNA-binding proteins in an ATP-dependent manner without itself being part of a final effector complex.</text>
</comment>
<comment type="similarity">
    <text evidence="1">Belongs to the DNA mismatch repair MutL/HexB family.</text>
</comment>
<proteinExistence type="inferred from homology"/>
<keyword id="KW-0227">DNA damage</keyword>
<keyword id="KW-0234">DNA repair</keyword>
<keyword id="KW-1185">Reference proteome</keyword>
<name>MUTL_SHIFL</name>
<evidence type="ECO:0000255" key="1">
    <source>
        <dbReference type="HAMAP-Rule" id="MF_00149"/>
    </source>
</evidence>
<evidence type="ECO:0000256" key="2">
    <source>
        <dbReference type="SAM" id="MobiDB-lite"/>
    </source>
</evidence>